<name>EFG_MARMM</name>
<sequence length="691" mass="76150">MARDYKIEDYRNFGIMAHIDAGKTTTTERILYYTGKSHKIGEVHDGAATMDWMEQEQERGITITSAATTCFWNGKRLNIIDTPGHVDFTIEVERSLRVLDGAVCCLDANAGVEPQTETVWRQADRYKVPRMVFINKMDKLGADFFNCVKMIEDRLGATPLCVQLPIGSETEFEGVIDLIKMKELVWKGEGLGAEWEERDIRADLADKAAEYREALVETAVEQDEAAMEAYLEGEEPSEELLKSLIRKGCIALAFNPILCGTAFKNKGVQPLLDAVVDFLPNPTEVPAIKGIDFKTEEEVVRRASDDEPTSLLAFKIMNDPFVGSLTFARMYSGHLETGISLLNTVKDKKERIGRMLLMHSNSREDIKECFAGDIVAIAGLKDTTTGDTLCDPMKPVILERMEFPDPVIELAIEPKSKADQEKLGVALQRLAAEDPSFRMKTDEESGQTIIAGMGELHLDILVDRMKREFKVEANVGAPQVAYRESLSQKGLVDYTHKKQSGGSGQFARVKIEFGPGEPGSGFVFESKIVGGNVPKEYIPGVEKGLKSVMDGGLIAGFPVIDVHAMLVDGAYHDVDSSVLAFEIAARAAFREAKSHCAPKLLEPIMKVEVVTPDEYTGGVIGDLNSRRGQIAGQEMRGNATVVNAMVPLANMFGYVNNLRSATQGRAQFTMLFDHYEAVPKAVEQEVIAKSA</sequence>
<feature type="chain" id="PRO_0000263467" description="Elongation factor G">
    <location>
        <begin position="1"/>
        <end position="691"/>
    </location>
</feature>
<feature type="domain" description="tr-type G">
    <location>
        <begin position="8"/>
        <end position="283"/>
    </location>
</feature>
<feature type="binding site" evidence="1">
    <location>
        <begin position="17"/>
        <end position="24"/>
    </location>
    <ligand>
        <name>GTP</name>
        <dbReference type="ChEBI" id="CHEBI:37565"/>
    </ligand>
</feature>
<feature type="binding site" evidence="1">
    <location>
        <begin position="81"/>
        <end position="85"/>
    </location>
    <ligand>
        <name>GTP</name>
        <dbReference type="ChEBI" id="CHEBI:37565"/>
    </ligand>
</feature>
<feature type="binding site" evidence="1">
    <location>
        <begin position="135"/>
        <end position="138"/>
    </location>
    <ligand>
        <name>GTP</name>
        <dbReference type="ChEBI" id="CHEBI:37565"/>
    </ligand>
</feature>
<reference key="1">
    <citation type="submission" date="2006-08" db="EMBL/GenBank/DDBJ databases">
        <title>Complete sequence of Maricaulis maris MCS10.</title>
        <authorList>
            <consortium name="US DOE Joint Genome Institute"/>
            <person name="Copeland A."/>
            <person name="Lucas S."/>
            <person name="Lapidus A."/>
            <person name="Barry K."/>
            <person name="Detter J.C."/>
            <person name="Glavina del Rio T."/>
            <person name="Hammon N."/>
            <person name="Israni S."/>
            <person name="Dalin E."/>
            <person name="Tice H."/>
            <person name="Pitluck S."/>
            <person name="Saunders E."/>
            <person name="Brettin T."/>
            <person name="Bruce D."/>
            <person name="Han C."/>
            <person name="Tapia R."/>
            <person name="Gilna P."/>
            <person name="Schmutz J."/>
            <person name="Larimer F."/>
            <person name="Land M."/>
            <person name="Hauser L."/>
            <person name="Kyrpides N."/>
            <person name="Mikhailova N."/>
            <person name="Viollier P."/>
            <person name="Stephens C."/>
            <person name="Richardson P."/>
        </authorList>
    </citation>
    <scope>NUCLEOTIDE SEQUENCE [LARGE SCALE GENOMIC DNA]</scope>
    <source>
        <strain>MCS10</strain>
    </source>
</reference>
<accession>Q0ANP7</accession>
<evidence type="ECO:0000255" key="1">
    <source>
        <dbReference type="HAMAP-Rule" id="MF_00054"/>
    </source>
</evidence>
<proteinExistence type="inferred from homology"/>
<gene>
    <name evidence="1" type="primary">fusA</name>
    <name type="ordered locus">Mmar10_1798</name>
</gene>
<organism>
    <name type="scientific">Maricaulis maris (strain MCS10)</name>
    <name type="common">Caulobacter maris</name>
    <dbReference type="NCBI Taxonomy" id="394221"/>
    <lineage>
        <taxon>Bacteria</taxon>
        <taxon>Pseudomonadati</taxon>
        <taxon>Pseudomonadota</taxon>
        <taxon>Alphaproteobacteria</taxon>
        <taxon>Maricaulales</taxon>
        <taxon>Maricaulaceae</taxon>
        <taxon>Maricaulis</taxon>
    </lineage>
</organism>
<keyword id="KW-0963">Cytoplasm</keyword>
<keyword id="KW-0251">Elongation factor</keyword>
<keyword id="KW-0342">GTP-binding</keyword>
<keyword id="KW-0547">Nucleotide-binding</keyword>
<keyword id="KW-0648">Protein biosynthesis</keyword>
<keyword id="KW-1185">Reference proteome</keyword>
<protein>
    <recommendedName>
        <fullName evidence="1">Elongation factor G</fullName>
        <shortName evidence="1">EF-G</shortName>
    </recommendedName>
</protein>
<comment type="function">
    <text evidence="1">Catalyzes the GTP-dependent ribosomal translocation step during translation elongation. During this step, the ribosome changes from the pre-translocational (PRE) to the post-translocational (POST) state as the newly formed A-site-bound peptidyl-tRNA and P-site-bound deacylated tRNA move to the P and E sites, respectively. Catalyzes the coordinated movement of the two tRNA molecules, the mRNA and conformational changes in the ribosome.</text>
</comment>
<comment type="subcellular location">
    <subcellularLocation>
        <location evidence="1">Cytoplasm</location>
    </subcellularLocation>
</comment>
<comment type="similarity">
    <text evidence="1">Belongs to the TRAFAC class translation factor GTPase superfamily. Classic translation factor GTPase family. EF-G/EF-2 subfamily.</text>
</comment>
<dbReference type="EMBL" id="CP000449">
    <property type="protein sequence ID" value="ABI66090.1"/>
    <property type="molecule type" value="Genomic_DNA"/>
</dbReference>
<dbReference type="RefSeq" id="WP_011643736.1">
    <property type="nucleotide sequence ID" value="NC_008347.1"/>
</dbReference>
<dbReference type="SMR" id="Q0ANP7"/>
<dbReference type="STRING" id="394221.Mmar10_1798"/>
<dbReference type="KEGG" id="mmr:Mmar10_1798"/>
<dbReference type="eggNOG" id="COG0480">
    <property type="taxonomic scope" value="Bacteria"/>
</dbReference>
<dbReference type="HOGENOM" id="CLU_002794_4_1_5"/>
<dbReference type="OrthoDB" id="7622291at2"/>
<dbReference type="Proteomes" id="UP000001964">
    <property type="component" value="Chromosome"/>
</dbReference>
<dbReference type="GO" id="GO:0005737">
    <property type="term" value="C:cytoplasm"/>
    <property type="evidence" value="ECO:0007669"/>
    <property type="project" value="UniProtKB-SubCell"/>
</dbReference>
<dbReference type="GO" id="GO:0005525">
    <property type="term" value="F:GTP binding"/>
    <property type="evidence" value="ECO:0007669"/>
    <property type="project" value="UniProtKB-UniRule"/>
</dbReference>
<dbReference type="GO" id="GO:0003924">
    <property type="term" value="F:GTPase activity"/>
    <property type="evidence" value="ECO:0007669"/>
    <property type="project" value="InterPro"/>
</dbReference>
<dbReference type="GO" id="GO:0003746">
    <property type="term" value="F:translation elongation factor activity"/>
    <property type="evidence" value="ECO:0007669"/>
    <property type="project" value="UniProtKB-UniRule"/>
</dbReference>
<dbReference type="GO" id="GO:0032790">
    <property type="term" value="P:ribosome disassembly"/>
    <property type="evidence" value="ECO:0007669"/>
    <property type="project" value="TreeGrafter"/>
</dbReference>
<dbReference type="CDD" id="cd01886">
    <property type="entry name" value="EF-G"/>
    <property type="match status" value="1"/>
</dbReference>
<dbReference type="CDD" id="cd16262">
    <property type="entry name" value="EFG_III"/>
    <property type="match status" value="1"/>
</dbReference>
<dbReference type="CDD" id="cd01434">
    <property type="entry name" value="EFG_mtEFG1_IV"/>
    <property type="match status" value="1"/>
</dbReference>
<dbReference type="CDD" id="cd03713">
    <property type="entry name" value="EFG_mtEFG_C"/>
    <property type="match status" value="1"/>
</dbReference>
<dbReference type="CDD" id="cd04088">
    <property type="entry name" value="EFG_mtEFG_II"/>
    <property type="match status" value="1"/>
</dbReference>
<dbReference type="FunFam" id="2.40.30.10:FF:000006">
    <property type="entry name" value="Elongation factor G"/>
    <property type="match status" value="1"/>
</dbReference>
<dbReference type="FunFam" id="3.30.230.10:FF:000003">
    <property type="entry name" value="Elongation factor G"/>
    <property type="match status" value="1"/>
</dbReference>
<dbReference type="FunFam" id="3.30.70.240:FF:000001">
    <property type="entry name" value="Elongation factor G"/>
    <property type="match status" value="1"/>
</dbReference>
<dbReference type="FunFam" id="3.30.70.870:FF:000001">
    <property type="entry name" value="Elongation factor G"/>
    <property type="match status" value="1"/>
</dbReference>
<dbReference type="FunFam" id="3.40.50.300:FF:000029">
    <property type="entry name" value="Elongation factor G"/>
    <property type="match status" value="1"/>
</dbReference>
<dbReference type="Gene3D" id="3.30.230.10">
    <property type="match status" value="1"/>
</dbReference>
<dbReference type="Gene3D" id="3.30.70.240">
    <property type="match status" value="1"/>
</dbReference>
<dbReference type="Gene3D" id="3.30.70.870">
    <property type="entry name" value="Elongation Factor G (Translational Gtpase), domain 3"/>
    <property type="match status" value="1"/>
</dbReference>
<dbReference type="Gene3D" id="3.40.50.300">
    <property type="entry name" value="P-loop containing nucleotide triphosphate hydrolases"/>
    <property type="match status" value="1"/>
</dbReference>
<dbReference type="Gene3D" id="2.40.30.10">
    <property type="entry name" value="Translation factors"/>
    <property type="match status" value="1"/>
</dbReference>
<dbReference type="HAMAP" id="MF_00054_B">
    <property type="entry name" value="EF_G_EF_2_B"/>
    <property type="match status" value="1"/>
</dbReference>
<dbReference type="InterPro" id="IPR053905">
    <property type="entry name" value="EF-G-like_DII"/>
</dbReference>
<dbReference type="InterPro" id="IPR041095">
    <property type="entry name" value="EFG_II"/>
</dbReference>
<dbReference type="InterPro" id="IPR009022">
    <property type="entry name" value="EFG_III"/>
</dbReference>
<dbReference type="InterPro" id="IPR035647">
    <property type="entry name" value="EFG_III/V"/>
</dbReference>
<dbReference type="InterPro" id="IPR047872">
    <property type="entry name" value="EFG_IV"/>
</dbReference>
<dbReference type="InterPro" id="IPR035649">
    <property type="entry name" value="EFG_V"/>
</dbReference>
<dbReference type="InterPro" id="IPR000640">
    <property type="entry name" value="EFG_V-like"/>
</dbReference>
<dbReference type="InterPro" id="IPR031157">
    <property type="entry name" value="G_TR_CS"/>
</dbReference>
<dbReference type="InterPro" id="IPR027417">
    <property type="entry name" value="P-loop_NTPase"/>
</dbReference>
<dbReference type="InterPro" id="IPR020568">
    <property type="entry name" value="Ribosomal_Su5_D2-typ_SF"/>
</dbReference>
<dbReference type="InterPro" id="IPR014721">
    <property type="entry name" value="Ribsml_uS5_D2-typ_fold_subgr"/>
</dbReference>
<dbReference type="InterPro" id="IPR005225">
    <property type="entry name" value="Small_GTP-bd"/>
</dbReference>
<dbReference type="InterPro" id="IPR000795">
    <property type="entry name" value="T_Tr_GTP-bd_dom"/>
</dbReference>
<dbReference type="InterPro" id="IPR009000">
    <property type="entry name" value="Transl_B-barrel_sf"/>
</dbReference>
<dbReference type="InterPro" id="IPR004540">
    <property type="entry name" value="Transl_elong_EFG/EF2"/>
</dbReference>
<dbReference type="InterPro" id="IPR005517">
    <property type="entry name" value="Transl_elong_EFG/EF2_IV"/>
</dbReference>
<dbReference type="NCBIfam" id="TIGR00484">
    <property type="entry name" value="EF-G"/>
    <property type="match status" value="1"/>
</dbReference>
<dbReference type="NCBIfam" id="NF009381">
    <property type="entry name" value="PRK12740.1-5"/>
    <property type="match status" value="1"/>
</dbReference>
<dbReference type="NCBIfam" id="TIGR00231">
    <property type="entry name" value="small_GTP"/>
    <property type="match status" value="1"/>
</dbReference>
<dbReference type="PANTHER" id="PTHR43261:SF1">
    <property type="entry name" value="RIBOSOME-RELEASING FACTOR 2, MITOCHONDRIAL"/>
    <property type="match status" value="1"/>
</dbReference>
<dbReference type="PANTHER" id="PTHR43261">
    <property type="entry name" value="TRANSLATION ELONGATION FACTOR G-RELATED"/>
    <property type="match status" value="1"/>
</dbReference>
<dbReference type="Pfam" id="PF22042">
    <property type="entry name" value="EF-G_D2"/>
    <property type="match status" value="1"/>
</dbReference>
<dbReference type="Pfam" id="PF00679">
    <property type="entry name" value="EFG_C"/>
    <property type="match status" value="1"/>
</dbReference>
<dbReference type="Pfam" id="PF14492">
    <property type="entry name" value="EFG_III"/>
    <property type="match status" value="1"/>
</dbReference>
<dbReference type="Pfam" id="PF03764">
    <property type="entry name" value="EFG_IV"/>
    <property type="match status" value="1"/>
</dbReference>
<dbReference type="Pfam" id="PF00009">
    <property type="entry name" value="GTP_EFTU"/>
    <property type="match status" value="1"/>
</dbReference>
<dbReference type="PRINTS" id="PR00315">
    <property type="entry name" value="ELONGATNFCT"/>
</dbReference>
<dbReference type="SMART" id="SM00838">
    <property type="entry name" value="EFG_C"/>
    <property type="match status" value="1"/>
</dbReference>
<dbReference type="SMART" id="SM00889">
    <property type="entry name" value="EFG_IV"/>
    <property type="match status" value="1"/>
</dbReference>
<dbReference type="SUPFAM" id="SSF54980">
    <property type="entry name" value="EF-G C-terminal domain-like"/>
    <property type="match status" value="2"/>
</dbReference>
<dbReference type="SUPFAM" id="SSF52540">
    <property type="entry name" value="P-loop containing nucleoside triphosphate hydrolases"/>
    <property type="match status" value="1"/>
</dbReference>
<dbReference type="SUPFAM" id="SSF54211">
    <property type="entry name" value="Ribosomal protein S5 domain 2-like"/>
    <property type="match status" value="1"/>
</dbReference>
<dbReference type="SUPFAM" id="SSF50447">
    <property type="entry name" value="Translation proteins"/>
    <property type="match status" value="1"/>
</dbReference>
<dbReference type="PROSITE" id="PS00301">
    <property type="entry name" value="G_TR_1"/>
    <property type="match status" value="1"/>
</dbReference>
<dbReference type="PROSITE" id="PS51722">
    <property type="entry name" value="G_TR_2"/>
    <property type="match status" value="1"/>
</dbReference>